<comment type="function">
    <text>Involved in bolA gene expression at the stationary phase.</text>
</comment>
<comment type="cofactor">
    <cofactor evidence="2">
        <name>Zn(2+)</name>
        <dbReference type="ChEBI" id="CHEBI:29105"/>
    </cofactor>
    <text evidence="2">Binds 1 zinc ion.</text>
</comment>
<comment type="subcellular location">
    <subcellularLocation>
        <location evidence="2">Cytoplasm</location>
    </subcellularLocation>
</comment>
<comment type="similarity">
    <text evidence="2">Belongs to the SprT family.</text>
</comment>
<protein>
    <recommendedName>
        <fullName>Protein SprT</fullName>
    </recommendedName>
</protein>
<reference key="1">
    <citation type="submission" date="1996-02" db="EMBL/GenBank/DDBJ databases">
        <title>A newly identified gene sprT which is involved in bolA gene expression.</title>
        <authorList>
            <person name="Utsumi R."/>
            <person name="Suzuki T."/>
        </authorList>
    </citation>
    <scope>NUCLEOTIDE SEQUENCE [GENOMIC DNA]</scope>
</reference>
<reference key="2">
    <citation type="thesis" date="1992" institute="University of Cambridge" country="United Kingdom">
        <authorList>
            <person name="Roberts P.E."/>
        </authorList>
    </citation>
    <scope>NUCLEOTIDE SEQUENCE [GENOMIC DNA]</scope>
</reference>
<reference key="3">
    <citation type="journal article" date="1997" name="Science">
        <title>The complete genome sequence of Escherichia coli K-12.</title>
        <authorList>
            <person name="Blattner F.R."/>
            <person name="Plunkett G. III"/>
            <person name="Bloch C.A."/>
            <person name="Perna N.T."/>
            <person name="Burland V."/>
            <person name="Riley M."/>
            <person name="Collado-Vides J."/>
            <person name="Glasner J.D."/>
            <person name="Rode C.K."/>
            <person name="Mayhew G.F."/>
            <person name="Gregor J."/>
            <person name="Davis N.W."/>
            <person name="Kirkpatrick H.A."/>
            <person name="Goeden M.A."/>
            <person name="Rose D.J."/>
            <person name="Mau B."/>
            <person name="Shao Y."/>
        </authorList>
    </citation>
    <scope>NUCLEOTIDE SEQUENCE [LARGE SCALE GENOMIC DNA]</scope>
    <source>
        <strain>K12 / MG1655 / ATCC 47076</strain>
    </source>
</reference>
<reference key="4">
    <citation type="journal article" date="2006" name="Mol. Syst. Biol.">
        <title>Highly accurate genome sequences of Escherichia coli K-12 strains MG1655 and W3110.</title>
        <authorList>
            <person name="Hayashi K."/>
            <person name="Morooka N."/>
            <person name="Yamamoto Y."/>
            <person name="Fujita K."/>
            <person name="Isono K."/>
            <person name="Choi S."/>
            <person name="Ohtsubo E."/>
            <person name="Baba T."/>
            <person name="Wanner B.L."/>
            <person name="Mori H."/>
            <person name="Horiuchi T."/>
        </authorList>
    </citation>
    <scope>NUCLEOTIDE SEQUENCE [LARGE SCALE GENOMIC DNA]</scope>
    <source>
        <strain>K12 / W3110 / ATCC 27325 / DSM 5911</strain>
    </source>
</reference>
<reference key="5">
    <citation type="journal article" date="1994" name="J. Bacteriol.">
        <title>Location of the endA gene coding for endonuclease I on the physical map of the Escherichia coli K-12 chromosome.</title>
        <authorList>
            <person name="Jekel M."/>
            <person name="Wackernagel W."/>
        </authorList>
    </citation>
    <scope>NUCLEOTIDE SEQUENCE [GENOMIC DNA] OF 70-165</scope>
    <source>
        <strain>K12 / W3110 / ATCC 27325 / DSM 5911</strain>
    </source>
</reference>
<reference key="6">
    <citation type="journal article" date="1994" name="Nucleic Acids Res.">
        <title>Intrinsic and extrinsic approaches for detecting genes in a bacterial genome.</title>
        <authorList>
            <person name="Borodovsky M."/>
            <person name="Rudd K.E."/>
            <person name="Koonin E.V."/>
        </authorList>
    </citation>
    <scope>IDENTIFICATION</scope>
</reference>
<evidence type="ECO:0000255" key="1"/>
<evidence type="ECO:0000305" key="2"/>
<name>SPRT_ECOLI</name>
<feature type="chain" id="PRO_0000213266" description="Protein SprT">
    <location>
        <begin position="1"/>
        <end position="165"/>
    </location>
</feature>
<feature type="domain" description="SprT-like">
    <location>
        <begin position="20"/>
        <end position="163"/>
    </location>
</feature>
<feature type="active site" evidence="1">
    <location>
        <position position="79"/>
    </location>
</feature>
<feature type="binding site" evidence="1">
    <location>
        <position position="78"/>
    </location>
    <ligand>
        <name>Zn(2+)</name>
        <dbReference type="ChEBI" id="CHEBI:29105"/>
    </ligand>
</feature>
<feature type="binding site" evidence="1">
    <location>
        <position position="82"/>
    </location>
    <ligand>
        <name>Zn(2+)</name>
        <dbReference type="ChEBI" id="CHEBI:29105"/>
    </ligand>
</feature>
<gene>
    <name type="primary">sprT</name>
    <name type="synonym">yggI</name>
    <name type="ordered locus">b2944</name>
    <name type="ordered locus">JW2911</name>
</gene>
<proteinExistence type="inferred from homology"/>
<sequence>MKTSRLPIAIQQAVMRRLREKLAQANLKLGRNYPEPKLSYTQRGTSAGTAWLESYEIRLNPVLLLENSEAFIEEVVPHELAHLLVWKHFGRVAPHGKEWKWMMENVLGVPARRTHQFELQSVRRNTFPYRCKCQEHQLTVRRHNRVVRGEAVYRCVHCGEQLVAK</sequence>
<organism>
    <name type="scientific">Escherichia coli (strain K12)</name>
    <dbReference type="NCBI Taxonomy" id="83333"/>
    <lineage>
        <taxon>Bacteria</taxon>
        <taxon>Pseudomonadati</taxon>
        <taxon>Pseudomonadota</taxon>
        <taxon>Gammaproteobacteria</taxon>
        <taxon>Enterobacterales</taxon>
        <taxon>Enterobacteriaceae</taxon>
        <taxon>Escherichia</taxon>
    </lineage>
</organism>
<keyword id="KW-0963">Cytoplasm</keyword>
<keyword id="KW-0479">Metal-binding</keyword>
<keyword id="KW-1185">Reference proteome</keyword>
<keyword id="KW-0862">Zinc</keyword>
<dbReference type="EMBL" id="D83644">
    <property type="protein sequence ID" value="BAA12021.1"/>
    <property type="molecule type" value="Genomic_DNA"/>
</dbReference>
<dbReference type="EMBL" id="U28377">
    <property type="protein sequence ID" value="AAA69111.1"/>
    <property type="molecule type" value="Genomic_DNA"/>
</dbReference>
<dbReference type="EMBL" id="U00096">
    <property type="protein sequence ID" value="AAC75981.1"/>
    <property type="molecule type" value="Genomic_DNA"/>
</dbReference>
<dbReference type="EMBL" id="AP009048">
    <property type="protein sequence ID" value="BAE77007.1"/>
    <property type="molecule type" value="Genomic_DNA"/>
</dbReference>
<dbReference type="EMBL" id="X65169">
    <property type="status" value="NOT_ANNOTATED_CDS"/>
    <property type="molecule type" value="Genomic_DNA"/>
</dbReference>
<dbReference type="PIR" id="G65079">
    <property type="entry name" value="G65079"/>
</dbReference>
<dbReference type="RefSeq" id="NP_417419.1">
    <property type="nucleotide sequence ID" value="NC_000913.3"/>
</dbReference>
<dbReference type="RefSeq" id="WP_001300769.1">
    <property type="nucleotide sequence ID" value="NZ_SSUV01000019.1"/>
</dbReference>
<dbReference type="SMR" id="P39902"/>
<dbReference type="BioGRID" id="4259531">
    <property type="interactions" value="57"/>
</dbReference>
<dbReference type="FunCoup" id="P39902">
    <property type="interactions" value="51"/>
</dbReference>
<dbReference type="IntAct" id="P39902">
    <property type="interactions" value="7"/>
</dbReference>
<dbReference type="STRING" id="511145.b2944"/>
<dbReference type="PaxDb" id="511145-b2944"/>
<dbReference type="EnsemblBacteria" id="AAC75981">
    <property type="protein sequence ID" value="AAC75981"/>
    <property type="gene ID" value="b2944"/>
</dbReference>
<dbReference type="GeneID" id="947443"/>
<dbReference type="KEGG" id="ecj:JW2911"/>
<dbReference type="KEGG" id="eco:b2944"/>
<dbReference type="KEGG" id="ecoc:C3026_16115"/>
<dbReference type="PATRIC" id="fig|511145.12.peg.3037"/>
<dbReference type="EchoBASE" id="EB2043"/>
<dbReference type="eggNOG" id="COG3091">
    <property type="taxonomic scope" value="Bacteria"/>
</dbReference>
<dbReference type="HOGENOM" id="CLU_113336_0_1_6"/>
<dbReference type="InParanoid" id="P39902"/>
<dbReference type="OMA" id="QPHGEEW"/>
<dbReference type="OrthoDB" id="267364at2"/>
<dbReference type="PhylomeDB" id="P39902"/>
<dbReference type="BioCyc" id="EcoCyc:EG12122-MONOMER"/>
<dbReference type="PRO" id="PR:P39902"/>
<dbReference type="Proteomes" id="UP000000625">
    <property type="component" value="Chromosome"/>
</dbReference>
<dbReference type="GO" id="GO:0005737">
    <property type="term" value="C:cytoplasm"/>
    <property type="evidence" value="ECO:0007669"/>
    <property type="project" value="UniProtKB-SubCell"/>
</dbReference>
<dbReference type="GO" id="GO:0008270">
    <property type="term" value="F:zinc ion binding"/>
    <property type="evidence" value="ECO:0007669"/>
    <property type="project" value="UniProtKB-UniRule"/>
</dbReference>
<dbReference type="GO" id="GO:0006950">
    <property type="term" value="P:response to stress"/>
    <property type="evidence" value="ECO:0007669"/>
    <property type="project" value="UniProtKB-ARBA"/>
</dbReference>
<dbReference type="Gene3D" id="3.30.2010.10">
    <property type="entry name" value="Metalloproteases ('zincins'), catalytic domain"/>
    <property type="match status" value="1"/>
</dbReference>
<dbReference type="HAMAP" id="MF_00746">
    <property type="entry name" value="SprT"/>
    <property type="match status" value="1"/>
</dbReference>
<dbReference type="InterPro" id="IPR006640">
    <property type="entry name" value="SprT-like_domain"/>
</dbReference>
<dbReference type="InterPro" id="IPR035240">
    <property type="entry name" value="SprT_Zn_ribbon"/>
</dbReference>
<dbReference type="InterPro" id="IPR023483">
    <property type="entry name" value="Uncharacterised_SprT"/>
</dbReference>
<dbReference type="NCBIfam" id="NF003421">
    <property type="entry name" value="PRK04860.1"/>
    <property type="match status" value="1"/>
</dbReference>
<dbReference type="PANTHER" id="PTHR38773">
    <property type="entry name" value="PROTEIN SPRT"/>
    <property type="match status" value="1"/>
</dbReference>
<dbReference type="PANTHER" id="PTHR38773:SF1">
    <property type="entry name" value="PROTEIN SPRT"/>
    <property type="match status" value="1"/>
</dbReference>
<dbReference type="Pfam" id="PF10263">
    <property type="entry name" value="SprT-like"/>
    <property type="match status" value="1"/>
</dbReference>
<dbReference type="Pfam" id="PF17283">
    <property type="entry name" value="Zn_ribbon_SprT"/>
    <property type="match status" value="1"/>
</dbReference>
<dbReference type="SMART" id="SM00731">
    <property type="entry name" value="SprT"/>
    <property type="match status" value="1"/>
</dbReference>
<dbReference type="PROSITE" id="PS00142">
    <property type="entry name" value="ZINC_PROTEASE"/>
    <property type="match status" value="1"/>
</dbReference>
<accession>P39902</accession>
<accession>Q2M9P9</accession>